<keyword id="KW-0963">Cytoplasm</keyword>
<keyword id="KW-0312">Gluconeogenesis</keyword>
<keyword id="KW-0324">Glycolysis</keyword>
<keyword id="KW-0413">Isomerase</keyword>
<gene>
    <name evidence="1" type="primary">tpiA</name>
    <name type="ordered locus">CLB_0269</name>
</gene>
<dbReference type="EC" id="5.3.1.1" evidence="1"/>
<dbReference type="EMBL" id="CP000726">
    <property type="protein sequence ID" value="ABS34450.1"/>
    <property type="molecule type" value="Genomic_DNA"/>
</dbReference>
<dbReference type="RefSeq" id="WP_011986047.1">
    <property type="nucleotide sequence ID" value="NC_009697.1"/>
</dbReference>
<dbReference type="SMR" id="A7FQN8"/>
<dbReference type="KEGG" id="cba:CLB_0269"/>
<dbReference type="HOGENOM" id="CLU_024251_2_3_9"/>
<dbReference type="UniPathway" id="UPA00109">
    <property type="reaction ID" value="UER00189"/>
</dbReference>
<dbReference type="UniPathway" id="UPA00138"/>
<dbReference type="GO" id="GO:0005829">
    <property type="term" value="C:cytosol"/>
    <property type="evidence" value="ECO:0007669"/>
    <property type="project" value="TreeGrafter"/>
</dbReference>
<dbReference type="GO" id="GO:0004807">
    <property type="term" value="F:triose-phosphate isomerase activity"/>
    <property type="evidence" value="ECO:0007669"/>
    <property type="project" value="UniProtKB-UniRule"/>
</dbReference>
<dbReference type="GO" id="GO:0006094">
    <property type="term" value="P:gluconeogenesis"/>
    <property type="evidence" value="ECO:0007669"/>
    <property type="project" value="UniProtKB-UniRule"/>
</dbReference>
<dbReference type="GO" id="GO:0046166">
    <property type="term" value="P:glyceraldehyde-3-phosphate biosynthetic process"/>
    <property type="evidence" value="ECO:0007669"/>
    <property type="project" value="TreeGrafter"/>
</dbReference>
<dbReference type="GO" id="GO:0019563">
    <property type="term" value="P:glycerol catabolic process"/>
    <property type="evidence" value="ECO:0007669"/>
    <property type="project" value="TreeGrafter"/>
</dbReference>
<dbReference type="GO" id="GO:0006096">
    <property type="term" value="P:glycolytic process"/>
    <property type="evidence" value="ECO:0007669"/>
    <property type="project" value="UniProtKB-UniRule"/>
</dbReference>
<dbReference type="CDD" id="cd00311">
    <property type="entry name" value="TIM"/>
    <property type="match status" value="1"/>
</dbReference>
<dbReference type="FunFam" id="3.20.20.70:FF:000016">
    <property type="entry name" value="Triosephosphate isomerase"/>
    <property type="match status" value="1"/>
</dbReference>
<dbReference type="Gene3D" id="3.20.20.70">
    <property type="entry name" value="Aldolase class I"/>
    <property type="match status" value="1"/>
</dbReference>
<dbReference type="HAMAP" id="MF_00147_B">
    <property type="entry name" value="TIM_B"/>
    <property type="match status" value="1"/>
</dbReference>
<dbReference type="InterPro" id="IPR013785">
    <property type="entry name" value="Aldolase_TIM"/>
</dbReference>
<dbReference type="InterPro" id="IPR035990">
    <property type="entry name" value="TIM_sf"/>
</dbReference>
<dbReference type="InterPro" id="IPR022896">
    <property type="entry name" value="TrioseP_Isoase_bac/euk"/>
</dbReference>
<dbReference type="InterPro" id="IPR000652">
    <property type="entry name" value="Triosephosphate_isomerase"/>
</dbReference>
<dbReference type="InterPro" id="IPR020861">
    <property type="entry name" value="Triosephosphate_isomerase_AS"/>
</dbReference>
<dbReference type="NCBIfam" id="TIGR00419">
    <property type="entry name" value="tim"/>
    <property type="match status" value="1"/>
</dbReference>
<dbReference type="PANTHER" id="PTHR21139">
    <property type="entry name" value="TRIOSEPHOSPHATE ISOMERASE"/>
    <property type="match status" value="1"/>
</dbReference>
<dbReference type="PANTHER" id="PTHR21139:SF42">
    <property type="entry name" value="TRIOSEPHOSPHATE ISOMERASE"/>
    <property type="match status" value="1"/>
</dbReference>
<dbReference type="Pfam" id="PF00121">
    <property type="entry name" value="TIM"/>
    <property type="match status" value="1"/>
</dbReference>
<dbReference type="SUPFAM" id="SSF51351">
    <property type="entry name" value="Triosephosphate isomerase (TIM)"/>
    <property type="match status" value="1"/>
</dbReference>
<dbReference type="PROSITE" id="PS00171">
    <property type="entry name" value="TIM_1"/>
    <property type="match status" value="1"/>
</dbReference>
<dbReference type="PROSITE" id="PS51440">
    <property type="entry name" value="TIM_2"/>
    <property type="match status" value="1"/>
</dbReference>
<evidence type="ECO:0000255" key="1">
    <source>
        <dbReference type="HAMAP-Rule" id="MF_00147"/>
    </source>
</evidence>
<sequence length="248" mass="27276">MRTAIIAGNWKMNKTVKEAVELVKELKPLVKDAKCDVVVCPTYVCLPAVLEEVKGSNIKVGAQNMHFEESGAYTGEIAPKMLEELGVHYVIIGHSERRQYFNETDETVNKKVKKAFEHNLIPIVCCGESLEEREGNITEKVLEGQIKVGLKELSKEQVEKLVIAYEPIWAIGTGKTATDEQANETIGYIRTVVKAMYGESVADKIRIQYGGSVKPGTIKAQMAKEEIDGALVGGASLKAEDFAAIVNY</sequence>
<name>TPIS_CLOB1</name>
<reference key="1">
    <citation type="journal article" date="2007" name="PLoS ONE">
        <title>Analysis of the neurotoxin complex genes in Clostridium botulinum A1-A4 and B1 strains: BoNT/A3, /Ba4 and /B1 clusters are located within plasmids.</title>
        <authorList>
            <person name="Smith T.J."/>
            <person name="Hill K.K."/>
            <person name="Foley B.T."/>
            <person name="Detter J.C."/>
            <person name="Munk A.C."/>
            <person name="Bruce D.C."/>
            <person name="Doggett N.A."/>
            <person name="Smith L.A."/>
            <person name="Marks J.D."/>
            <person name="Xie G."/>
            <person name="Brettin T.S."/>
        </authorList>
    </citation>
    <scope>NUCLEOTIDE SEQUENCE [LARGE SCALE GENOMIC DNA]</scope>
    <source>
        <strain>ATCC 19397 / Type A</strain>
    </source>
</reference>
<organism>
    <name type="scientific">Clostridium botulinum (strain ATCC 19397 / Type A)</name>
    <dbReference type="NCBI Taxonomy" id="441770"/>
    <lineage>
        <taxon>Bacteria</taxon>
        <taxon>Bacillati</taxon>
        <taxon>Bacillota</taxon>
        <taxon>Clostridia</taxon>
        <taxon>Eubacteriales</taxon>
        <taxon>Clostridiaceae</taxon>
        <taxon>Clostridium</taxon>
    </lineage>
</organism>
<accession>A7FQN8</accession>
<protein>
    <recommendedName>
        <fullName evidence="1">Triosephosphate isomerase</fullName>
        <shortName evidence="1">TIM</shortName>
        <shortName evidence="1">TPI</shortName>
        <ecNumber evidence="1">5.3.1.1</ecNumber>
    </recommendedName>
    <alternativeName>
        <fullName evidence="1">Triose-phosphate isomerase</fullName>
    </alternativeName>
</protein>
<feature type="chain" id="PRO_1000071480" description="Triosephosphate isomerase">
    <location>
        <begin position="1"/>
        <end position="248"/>
    </location>
</feature>
<feature type="active site" description="Electrophile" evidence="1">
    <location>
        <position position="94"/>
    </location>
</feature>
<feature type="active site" description="Proton acceptor" evidence="1">
    <location>
        <position position="166"/>
    </location>
</feature>
<feature type="binding site" evidence="1">
    <location>
        <begin position="9"/>
        <end position="11"/>
    </location>
    <ligand>
        <name>substrate</name>
    </ligand>
</feature>
<feature type="binding site" evidence="1">
    <location>
        <position position="172"/>
    </location>
    <ligand>
        <name>substrate</name>
    </ligand>
</feature>
<feature type="binding site" evidence="1">
    <location>
        <position position="212"/>
    </location>
    <ligand>
        <name>substrate</name>
    </ligand>
</feature>
<feature type="binding site" evidence="1">
    <location>
        <begin position="233"/>
        <end position="234"/>
    </location>
    <ligand>
        <name>substrate</name>
    </ligand>
</feature>
<comment type="function">
    <text evidence="1">Involved in the gluconeogenesis. Catalyzes stereospecifically the conversion of dihydroxyacetone phosphate (DHAP) to D-glyceraldehyde-3-phosphate (G3P).</text>
</comment>
<comment type="catalytic activity">
    <reaction evidence="1">
        <text>D-glyceraldehyde 3-phosphate = dihydroxyacetone phosphate</text>
        <dbReference type="Rhea" id="RHEA:18585"/>
        <dbReference type="ChEBI" id="CHEBI:57642"/>
        <dbReference type="ChEBI" id="CHEBI:59776"/>
        <dbReference type="EC" id="5.3.1.1"/>
    </reaction>
</comment>
<comment type="pathway">
    <text evidence="1">Carbohydrate biosynthesis; gluconeogenesis.</text>
</comment>
<comment type="pathway">
    <text evidence="1">Carbohydrate degradation; glycolysis; D-glyceraldehyde 3-phosphate from glycerone phosphate: step 1/1.</text>
</comment>
<comment type="subunit">
    <text evidence="1">Homodimer.</text>
</comment>
<comment type="subcellular location">
    <subcellularLocation>
        <location evidence="1">Cytoplasm</location>
    </subcellularLocation>
</comment>
<comment type="similarity">
    <text evidence="1">Belongs to the triosephosphate isomerase family.</text>
</comment>
<proteinExistence type="inferred from homology"/>